<organism evidence="8">
    <name type="scientific">Mus musculus</name>
    <name type="common">Mouse</name>
    <dbReference type="NCBI Taxonomy" id="10090"/>
    <lineage>
        <taxon>Eukaryota</taxon>
        <taxon>Metazoa</taxon>
        <taxon>Chordata</taxon>
        <taxon>Craniata</taxon>
        <taxon>Vertebrata</taxon>
        <taxon>Euteleostomi</taxon>
        <taxon>Mammalia</taxon>
        <taxon>Eutheria</taxon>
        <taxon>Euarchontoglires</taxon>
        <taxon>Glires</taxon>
        <taxon>Rodentia</taxon>
        <taxon>Myomorpha</taxon>
        <taxon>Muroidea</taxon>
        <taxon>Muridae</taxon>
        <taxon>Murinae</taxon>
        <taxon>Mus</taxon>
        <taxon>Mus</taxon>
    </lineage>
</organism>
<accession>O08604</accession>
<accession>A2RSA1</accession>
<protein>
    <recommendedName>
        <fullName>Retinoic acid early-inducible protein 1-gamma</fullName>
        <shortName>RAE-1-gamma</shortName>
    </recommendedName>
</protein>
<reference evidence="7" key="1">
    <citation type="journal article" date="1996" name="J. Biochem.">
        <title>Isolation and characterization of retinoic acid-inducible cDNA clones in F9 cells: a novel cDNA family encodes cell surface proteins sharing partial homology with MHC class I molecules.</title>
        <authorList>
            <person name="Zou Z."/>
            <person name="Nomura M."/>
            <person name="Takihara Y."/>
            <person name="Yasunaga T."/>
            <person name="Shimada K."/>
        </authorList>
    </citation>
    <scope>NUCLEOTIDE SEQUENCE [MRNA]</scope>
    <scope>DEVELOPMENTAL STAGE</scope>
    <scope>INDUCTION</scope>
</reference>
<reference key="2">
    <citation type="journal article" date="2004" name="Genome Res.">
        <title>The status, quality, and expansion of the NIH full-length cDNA project: the Mammalian Gene Collection (MGC).</title>
        <authorList>
            <consortium name="The MGC Project Team"/>
        </authorList>
    </citation>
    <scope>NUCLEOTIDE SEQUENCE [LARGE SCALE MRNA]</scope>
    <source>
        <tissue>Brain</tissue>
    </source>
</reference>
<reference evidence="7" key="3">
    <citation type="journal article" date="2000" name="Immunity">
        <title>Retinoic acid early inducible genes define a ligand family for the activating NKG2D receptor in mice.</title>
        <authorList>
            <person name="Cerwenka A."/>
            <person name="Bakker A.B."/>
            <person name="McClanahan T."/>
            <person name="Wagner J."/>
            <person name="Wu J."/>
            <person name="Phillips J.H."/>
            <person name="Lanier L.L."/>
        </authorList>
    </citation>
    <scope>FUNCTION AS A LIGAND FOR KLRK1</scope>
    <scope>SUBCELLULAR LOCATION</scope>
    <scope>DEVELOPMENTAL STAGE</scope>
    <source>
        <strain evidence="4">ddY</strain>
        <tissue evidence="4">Lung</tissue>
    </source>
</reference>
<reference evidence="7" key="4">
    <citation type="journal article" date="1996" name="J. Biochem.">
        <title>Genomic structures and characterization of Rae1 family members encoding GPI-anchored cell surface proteins and expressed predominantly in embryonic mouse brain.</title>
        <authorList>
            <person name="Nomura M."/>
            <person name="Zou Z."/>
            <person name="Joh T."/>
            <person name="Takihara Y."/>
            <person name="Matsuda Y."/>
            <person name="Shimada K."/>
        </authorList>
    </citation>
    <scope>SUBCELLULAR LOCATION</scope>
    <scope>TISSUE SPECIFICITY</scope>
    <scope>GLYCOSYLATION</scope>
</reference>
<evidence type="ECO:0000250" key="1"/>
<evidence type="ECO:0000255" key="2"/>
<evidence type="ECO:0000256" key="3">
    <source>
        <dbReference type="SAM" id="MobiDB-lite"/>
    </source>
</evidence>
<evidence type="ECO:0000269" key="4">
    <source>
    </source>
</evidence>
<evidence type="ECO:0000269" key="5">
    <source>
    </source>
</evidence>
<evidence type="ECO:0000269" key="6">
    <source>
    </source>
</evidence>
<evidence type="ECO:0000305" key="7"/>
<evidence type="ECO:0000312" key="8">
    <source>
        <dbReference type="EMBL" id="BAA19486.1"/>
    </source>
</evidence>
<evidence type="ECO:0007829" key="9">
    <source>
        <dbReference type="PDB" id="4G59"/>
    </source>
</evidence>
<keyword id="KW-0002">3D-structure</keyword>
<keyword id="KW-1003">Cell membrane</keyword>
<keyword id="KW-1015">Disulfide bond</keyword>
<keyword id="KW-0325">Glycoprotein</keyword>
<keyword id="KW-0336">GPI-anchor</keyword>
<keyword id="KW-0449">Lipoprotein</keyword>
<keyword id="KW-0472">Membrane</keyword>
<keyword id="KW-1185">Reference proteome</keyword>
<keyword id="KW-0732">Signal</keyword>
<name>RAE1C_MOUSE</name>
<sequence>MAKAAVTKRHHFMIQKLLILLSYGYTNGLDDAHSLRCNLTIKAPTPADPLWYEAKCLVDEILILHLSNINKTMTSGDPGETANATEVGECLTQPVNDLCQKLRDKVSNTKVDTHKTNGYPHLQVTMIYPQSQGQTPSATWEFNISDSYFFTFYTENMSWRSANDESGVIMNKWNDDGDLVQRLKYFIPECRQKIDEFLKQSKEKPRSTSRSPSITQLTSTSPLPPPSHSTSKKGFISVGLIFISLLFAFAFAM</sequence>
<feature type="signal peptide" evidence="2">
    <location>
        <begin position="1"/>
        <end position="28"/>
    </location>
</feature>
<feature type="chain" id="PRO_0000019731" description="Retinoic acid early-inducible protein 1-gamma">
    <location>
        <begin position="29"/>
        <end position="227"/>
    </location>
</feature>
<feature type="propeptide" id="PRO_0000019732" description="Removed in mature form" evidence="2">
    <location>
        <begin position="228"/>
        <end position="253"/>
    </location>
</feature>
<feature type="region of interest" description="Disordered" evidence="3">
    <location>
        <begin position="198"/>
        <end position="230"/>
    </location>
</feature>
<feature type="compositionally biased region" description="Low complexity" evidence="3">
    <location>
        <begin position="211"/>
        <end position="221"/>
    </location>
</feature>
<feature type="lipid moiety-binding region" description="GPI-anchor amidated serine" evidence="2">
    <location>
        <position position="227"/>
    </location>
</feature>
<feature type="glycosylation site" description="N-linked (GlcNAc...) asparagine" evidence="2">
    <location>
        <position position="38"/>
    </location>
</feature>
<feature type="glycosylation site" description="N-linked (GlcNAc...) asparagine" evidence="2">
    <location>
        <position position="70"/>
    </location>
</feature>
<feature type="glycosylation site" description="N-linked (GlcNAc...) asparagine" evidence="2">
    <location>
        <position position="83"/>
    </location>
</feature>
<feature type="glycosylation site" description="N-linked (GlcNAc...) asparagine" evidence="2">
    <location>
        <position position="143"/>
    </location>
</feature>
<feature type="glycosylation site" description="N-linked (GlcNAc...) asparagine" evidence="2">
    <location>
        <position position="156"/>
    </location>
</feature>
<feature type="disulfide bond" evidence="1">
    <location>
        <begin position="37"/>
        <end position="56"/>
    </location>
</feature>
<feature type="disulfide bond" evidence="1">
    <location>
        <begin position="90"/>
        <end position="190"/>
    </location>
</feature>
<feature type="strand" evidence="9">
    <location>
        <begin position="35"/>
        <end position="41"/>
    </location>
</feature>
<feature type="strand" evidence="9">
    <location>
        <begin position="52"/>
        <end position="58"/>
    </location>
</feature>
<feature type="strand" evidence="9">
    <location>
        <begin position="61"/>
        <end position="69"/>
    </location>
</feature>
<feature type="helix" evidence="9">
    <location>
        <begin position="83"/>
        <end position="107"/>
    </location>
</feature>
<feature type="turn" evidence="9">
    <location>
        <begin position="113"/>
        <end position="116"/>
    </location>
</feature>
<feature type="strand" evidence="9">
    <location>
        <begin position="122"/>
        <end position="129"/>
    </location>
</feature>
<feature type="strand" evidence="9">
    <location>
        <begin position="139"/>
        <end position="144"/>
    </location>
</feature>
<feature type="turn" evidence="9">
    <location>
        <begin position="145"/>
        <end position="147"/>
    </location>
</feature>
<feature type="strand" evidence="9">
    <location>
        <begin position="148"/>
        <end position="153"/>
    </location>
</feature>
<feature type="turn" evidence="9">
    <location>
        <begin position="154"/>
        <end position="157"/>
    </location>
</feature>
<feature type="strand" evidence="9">
    <location>
        <begin position="158"/>
        <end position="163"/>
    </location>
</feature>
<feature type="helix" evidence="9">
    <location>
        <begin position="164"/>
        <end position="173"/>
    </location>
</feature>
<feature type="helix" evidence="9">
    <location>
        <begin position="177"/>
        <end position="184"/>
    </location>
</feature>
<feature type="helix" evidence="9">
    <location>
        <begin position="186"/>
        <end position="189"/>
    </location>
</feature>
<feature type="helix" evidence="9">
    <location>
        <begin position="191"/>
        <end position="200"/>
    </location>
</feature>
<dbReference type="EMBL" id="D64162">
    <property type="protein sequence ID" value="BAA19486.1"/>
    <property type="molecule type" value="mRNA"/>
</dbReference>
<dbReference type="EMBL" id="BC132028">
    <property type="protein sequence ID" value="AAI32029.1"/>
    <property type="molecule type" value="mRNA"/>
</dbReference>
<dbReference type="EMBL" id="BC132032">
    <property type="protein sequence ID" value="AAI32033.1"/>
    <property type="molecule type" value="mRNA"/>
</dbReference>
<dbReference type="RefSeq" id="NP_033044.1">
    <property type="nucleotide sequence ID" value="NM_009018.1"/>
</dbReference>
<dbReference type="PDB" id="4G59">
    <property type="method" value="X-ray"/>
    <property type="resolution" value="2.44 A"/>
    <property type="chains" value="A/B=29-232"/>
</dbReference>
<dbReference type="PDBsum" id="4G59"/>
<dbReference type="SMR" id="O08604"/>
<dbReference type="FunCoup" id="O08604">
    <property type="interactions" value="121"/>
</dbReference>
<dbReference type="GlyCosmos" id="O08604">
    <property type="glycosylation" value="5 sites, No reported glycans"/>
</dbReference>
<dbReference type="GlyGen" id="O08604">
    <property type="glycosylation" value="5 sites"/>
</dbReference>
<dbReference type="iPTMnet" id="O08604"/>
<dbReference type="PhosphoSitePlus" id="O08604"/>
<dbReference type="SwissPalm" id="O08604"/>
<dbReference type="ProteomicsDB" id="254976"/>
<dbReference type="DNASU" id="19370"/>
<dbReference type="GeneID" id="19370"/>
<dbReference type="KEGG" id="mmu:19370"/>
<dbReference type="UCSC" id="uc033fov.1">
    <property type="organism name" value="mouse"/>
</dbReference>
<dbReference type="AGR" id="MGI:109431"/>
<dbReference type="CTD" id="19370"/>
<dbReference type="MGI" id="MGI:109431">
    <property type="gene designation" value="Raet1c"/>
</dbReference>
<dbReference type="InParanoid" id="O08604"/>
<dbReference type="PhylomeDB" id="O08604"/>
<dbReference type="BioGRID-ORCS" id="19370">
    <property type="hits" value="0 hits in 16 CRISPR screens"/>
</dbReference>
<dbReference type="EvolutionaryTrace" id="O08604"/>
<dbReference type="PRO" id="PR:O08604"/>
<dbReference type="Proteomes" id="UP000000589">
    <property type="component" value="Unplaced"/>
</dbReference>
<dbReference type="RNAct" id="O08604">
    <property type="molecule type" value="protein"/>
</dbReference>
<dbReference type="GO" id="GO:0009897">
    <property type="term" value="C:external side of plasma membrane"/>
    <property type="evidence" value="ECO:0000314"/>
    <property type="project" value="MGI"/>
</dbReference>
<dbReference type="GO" id="GO:0005886">
    <property type="term" value="C:plasma membrane"/>
    <property type="evidence" value="ECO:0000314"/>
    <property type="project" value="UniProtKB"/>
</dbReference>
<dbReference type="GO" id="GO:0046703">
    <property type="term" value="F:natural killer cell lectin-like receptor binding"/>
    <property type="evidence" value="ECO:0000314"/>
    <property type="project" value="UniProtKB"/>
</dbReference>
<dbReference type="GO" id="GO:0071360">
    <property type="term" value="P:cellular response to exogenous dsRNA"/>
    <property type="evidence" value="ECO:0000314"/>
    <property type="project" value="MGI"/>
</dbReference>
<dbReference type="GO" id="GO:0071222">
    <property type="term" value="P:cellular response to lipopolysaccharide"/>
    <property type="evidence" value="ECO:0000314"/>
    <property type="project" value="MGI"/>
</dbReference>
<dbReference type="GO" id="GO:0042742">
    <property type="term" value="P:defense response to bacterium"/>
    <property type="evidence" value="ECO:0000314"/>
    <property type="project" value="MGI"/>
</dbReference>
<dbReference type="FunFam" id="3.30.500.10:FF:000004">
    <property type="entry name" value="Retinoic acid early-inducible protein 1-beta"/>
    <property type="match status" value="1"/>
</dbReference>
<dbReference type="Gene3D" id="3.30.500.10">
    <property type="entry name" value="MHC class I-like antigen recognition-like"/>
    <property type="match status" value="1"/>
</dbReference>
<dbReference type="InterPro" id="IPR050208">
    <property type="entry name" value="MHC_class-I_related"/>
</dbReference>
<dbReference type="InterPro" id="IPR037055">
    <property type="entry name" value="MHC_I-like_Ag-recog_sf"/>
</dbReference>
<dbReference type="InterPro" id="IPR011162">
    <property type="entry name" value="MHC_I/II-like_Ag-recog"/>
</dbReference>
<dbReference type="InterPro" id="IPR029287">
    <property type="entry name" value="RAE-1"/>
</dbReference>
<dbReference type="PANTHER" id="PTHR16675">
    <property type="entry name" value="MHC CLASS I-RELATED"/>
    <property type="match status" value="1"/>
</dbReference>
<dbReference type="PANTHER" id="PTHR16675:SF64">
    <property type="entry name" value="RETINOIC ACID EARLY TRANSCRIPT 1E"/>
    <property type="match status" value="1"/>
</dbReference>
<dbReference type="Pfam" id="PF14586">
    <property type="entry name" value="MHC_I_2"/>
    <property type="match status" value="1"/>
</dbReference>
<dbReference type="SUPFAM" id="SSF54452">
    <property type="entry name" value="MHC antigen-recognition domain"/>
    <property type="match status" value="1"/>
</dbReference>
<gene>
    <name type="primary">Raet1c</name>
</gene>
<proteinExistence type="evidence at protein level"/>
<comment type="function">
    <text evidence="4">Acts as a ligand for KLRK1.</text>
</comment>
<comment type="subcellular location">
    <subcellularLocation>
        <location evidence="4 6">Cell membrane</location>
        <topology evidence="4 6">Lipid-anchor</topology>
        <topology evidence="4 6">GPI-anchor</topology>
    </subcellularLocation>
</comment>
<comment type="tissue specificity">
    <text evidence="6">Expressed predominantly in embryonic brain.</text>
</comment>
<comment type="developmental stage">
    <text evidence="4 5">Expressed predominantly during early embryogenesis. Detected at high levels in 7, 11 and 14-day-old embryos but not in 18-day-old embryos. Very low levels detected in adults.</text>
</comment>
<comment type="induction">
    <text evidence="5">By retinoic acid.</text>
</comment>
<comment type="PTM">
    <text evidence="6">Glycosylated.</text>
</comment>
<comment type="similarity">
    <text evidence="7">Belongs to the NKG2D ligand family.</text>
</comment>